<keyword id="KW-0028">Amino-acid biosynthesis</keyword>
<keyword id="KW-0963">Cytoplasm</keyword>
<keyword id="KW-0220">Diaminopimelate biosynthesis</keyword>
<keyword id="KW-0457">Lysine biosynthesis</keyword>
<keyword id="KW-0520">NAD</keyword>
<keyword id="KW-0521">NADP</keyword>
<keyword id="KW-0560">Oxidoreductase</keyword>
<reference key="1">
    <citation type="journal article" date="2006" name="J. Bacteriol.">
        <title>Complete genome sequence of Yersinia pestis strains Antiqua and Nepal516: evidence of gene reduction in an emerging pathogen.</title>
        <authorList>
            <person name="Chain P.S.G."/>
            <person name="Hu P."/>
            <person name="Malfatti S.A."/>
            <person name="Radnedge L."/>
            <person name="Larimer F."/>
            <person name="Vergez L.M."/>
            <person name="Worsham P."/>
            <person name="Chu M.C."/>
            <person name="Andersen G.L."/>
        </authorList>
    </citation>
    <scope>NUCLEOTIDE SEQUENCE [LARGE SCALE GENOMIC DNA]</scope>
    <source>
        <strain>Antiqua</strain>
    </source>
</reference>
<dbReference type="EC" id="1.17.1.8" evidence="1"/>
<dbReference type="EMBL" id="CP000308">
    <property type="protein sequence ID" value="ABG16034.1"/>
    <property type="molecule type" value="Genomic_DNA"/>
</dbReference>
<dbReference type="RefSeq" id="WP_002210504.1">
    <property type="nucleotide sequence ID" value="NZ_CP009906.1"/>
</dbReference>
<dbReference type="SMR" id="Q1C0I8"/>
<dbReference type="GeneID" id="57974130"/>
<dbReference type="KEGG" id="ypa:YPA_4073"/>
<dbReference type="UniPathway" id="UPA00034">
    <property type="reaction ID" value="UER00018"/>
</dbReference>
<dbReference type="Proteomes" id="UP000001971">
    <property type="component" value="Chromosome"/>
</dbReference>
<dbReference type="GO" id="GO:0005829">
    <property type="term" value="C:cytosol"/>
    <property type="evidence" value="ECO:0007669"/>
    <property type="project" value="TreeGrafter"/>
</dbReference>
<dbReference type="GO" id="GO:0008839">
    <property type="term" value="F:4-hydroxy-tetrahydrodipicolinate reductase"/>
    <property type="evidence" value="ECO:0007669"/>
    <property type="project" value="UniProtKB-EC"/>
</dbReference>
<dbReference type="GO" id="GO:0051287">
    <property type="term" value="F:NAD binding"/>
    <property type="evidence" value="ECO:0007669"/>
    <property type="project" value="UniProtKB-UniRule"/>
</dbReference>
<dbReference type="GO" id="GO:0050661">
    <property type="term" value="F:NADP binding"/>
    <property type="evidence" value="ECO:0007669"/>
    <property type="project" value="UniProtKB-UniRule"/>
</dbReference>
<dbReference type="GO" id="GO:0016726">
    <property type="term" value="F:oxidoreductase activity, acting on CH or CH2 groups, NAD or NADP as acceptor"/>
    <property type="evidence" value="ECO:0007669"/>
    <property type="project" value="UniProtKB-UniRule"/>
</dbReference>
<dbReference type="GO" id="GO:0019877">
    <property type="term" value="P:diaminopimelate biosynthetic process"/>
    <property type="evidence" value="ECO:0007669"/>
    <property type="project" value="UniProtKB-UniRule"/>
</dbReference>
<dbReference type="GO" id="GO:0009089">
    <property type="term" value="P:lysine biosynthetic process via diaminopimelate"/>
    <property type="evidence" value="ECO:0007669"/>
    <property type="project" value="UniProtKB-UniRule"/>
</dbReference>
<dbReference type="CDD" id="cd02274">
    <property type="entry name" value="DHDPR_N"/>
    <property type="match status" value="1"/>
</dbReference>
<dbReference type="FunFam" id="3.30.360.10:FF:000004">
    <property type="entry name" value="4-hydroxy-tetrahydrodipicolinate reductase"/>
    <property type="match status" value="1"/>
</dbReference>
<dbReference type="FunFam" id="3.40.50.720:FF:000048">
    <property type="entry name" value="4-hydroxy-tetrahydrodipicolinate reductase"/>
    <property type="match status" value="1"/>
</dbReference>
<dbReference type="Gene3D" id="3.30.360.10">
    <property type="entry name" value="Dihydrodipicolinate Reductase, domain 2"/>
    <property type="match status" value="1"/>
</dbReference>
<dbReference type="Gene3D" id="3.40.50.720">
    <property type="entry name" value="NAD(P)-binding Rossmann-like Domain"/>
    <property type="match status" value="1"/>
</dbReference>
<dbReference type="HAMAP" id="MF_00102">
    <property type="entry name" value="DapB"/>
    <property type="match status" value="1"/>
</dbReference>
<dbReference type="InterPro" id="IPR022663">
    <property type="entry name" value="DapB_C"/>
</dbReference>
<dbReference type="InterPro" id="IPR000846">
    <property type="entry name" value="DapB_N"/>
</dbReference>
<dbReference type="InterPro" id="IPR022664">
    <property type="entry name" value="DapB_N_CS"/>
</dbReference>
<dbReference type="InterPro" id="IPR023940">
    <property type="entry name" value="DHDPR_bac"/>
</dbReference>
<dbReference type="InterPro" id="IPR036291">
    <property type="entry name" value="NAD(P)-bd_dom_sf"/>
</dbReference>
<dbReference type="NCBIfam" id="TIGR00036">
    <property type="entry name" value="dapB"/>
    <property type="match status" value="1"/>
</dbReference>
<dbReference type="PANTHER" id="PTHR20836:SF0">
    <property type="entry name" value="4-HYDROXY-TETRAHYDRODIPICOLINATE REDUCTASE 1, CHLOROPLASTIC-RELATED"/>
    <property type="match status" value="1"/>
</dbReference>
<dbReference type="PANTHER" id="PTHR20836">
    <property type="entry name" value="DIHYDRODIPICOLINATE REDUCTASE"/>
    <property type="match status" value="1"/>
</dbReference>
<dbReference type="Pfam" id="PF05173">
    <property type="entry name" value="DapB_C"/>
    <property type="match status" value="1"/>
</dbReference>
<dbReference type="Pfam" id="PF01113">
    <property type="entry name" value="DapB_N"/>
    <property type="match status" value="1"/>
</dbReference>
<dbReference type="PIRSF" id="PIRSF000161">
    <property type="entry name" value="DHPR"/>
    <property type="match status" value="1"/>
</dbReference>
<dbReference type="SUPFAM" id="SSF55347">
    <property type="entry name" value="Glyceraldehyde-3-phosphate dehydrogenase-like, C-terminal domain"/>
    <property type="match status" value="1"/>
</dbReference>
<dbReference type="SUPFAM" id="SSF51735">
    <property type="entry name" value="NAD(P)-binding Rossmann-fold domains"/>
    <property type="match status" value="1"/>
</dbReference>
<dbReference type="PROSITE" id="PS01298">
    <property type="entry name" value="DAPB"/>
    <property type="match status" value="1"/>
</dbReference>
<proteinExistence type="inferred from homology"/>
<evidence type="ECO:0000255" key="1">
    <source>
        <dbReference type="HAMAP-Rule" id="MF_00102"/>
    </source>
</evidence>
<evidence type="ECO:0000305" key="2"/>
<gene>
    <name evidence="1" type="primary">dapB</name>
    <name type="ordered locus">YPA_4073</name>
</gene>
<organism>
    <name type="scientific">Yersinia pestis bv. Antiqua (strain Antiqua)</name>
    <dbReference type="NCBI Taxonomy" id="360102"/>
    <lineage>
        <taxon>Bacteria</taxon>
        <taxon>Pseudomonadati</taxon>
        <taxon>Pseudomonadota</taxon>
        <taxon>Gammaproteobacteria</taxon>
        <taxon>Enterobacterales</taxon>
        <taxon>Yersiniaceae</taxon>
        <taxon>Yersinia</taxon>
    </lineage>
</organism>
<protein>
    <recommendedName>
        <fullName evidence="1">4-hydroxy-tetrahydrodipicolinate reductase</fullName>
        <shortName evidence="1">HTPA reductase</shortName>
        <ecNumber evidence="1">1.17.1.8</ecNumber>
    </recommendedName>
</protein>
<feature type="chain" id="PRO_1000008663" description="4-hydroxy-tetrahydrodipicolinate reductase">
    <location>
        <begin position="1"/>
        <end position="273"/>
    </location>
</feature>
<feature type="active site" description="Proton donor/acceptor" evidence="1">
    <location>
        <position position="159"/>
    </location>
</feature>
<feature type="active site" description="Proton donor" evidence="1">
    <location>
        <position position="163"/>
    </location>
</feature>
<feature type="binding site" evidence="1">
    <location>
        <begin position="12"/>
        <end position="17"/>
    </location>
    <ligand>
        <name>NAD(+)</name>
        <dbReference type="ChEBI" id="CHEBI:57540"/>
    </ligand>
</feature>
<feature type="binding site" evidence="1">
    <location>
        <position position="38"/>
    </location>
    <ligand>
        <name>NAD(+)</name>
        <dbReference type="ChEBI" id="CHEBI:57540"/>
    </ligand>
</feature>
<feature type="binding site" evidence="1">
    <location>
        <position position="39"/>
    </location>
    <ligand>
        <name>NADP(+)</name>
        <dbReference type="ChEBI" id="CHEBI:58349"/>
    </ligand>
</feature>
<feature type="binding site" evidence="1">
    <location>
        <begin position="102"/>
        <end position="104"/>
    </location>
    <ligand>
        <name>NAD(+)</name>
        <dbReference type="ChEBI" id="CHEBI:57540"/>
    </ligand>
</feature>
<feature type="binding site" evidence="1">
    <location>
        <begin position="126"/>
        <end position="129"/>
    </location>
    <ligand>
        <name>NAD(+)</name>
        <dbReference type="ChEBI" id="CHEBI:57540"/>
    </ligand>
</feature>
<feature type="binding site" evidence="1">
    <location>
        <position position="160"/>
    </location>
    <ligand>
        <name>(S)-2,3,4,5-tetrahydrodipicolinate</name>
        <dbReference type="ChEBI" id="CHEBI:16845"/>
    </ligand>
</feature>
<feature type="binding site" evidence="1">
    <location>
        <begin position="169"/>
        <end position="170"/>
    </location>
    <ligand>
        <name>(S)-2,3,4,5-tetrahydrodipicolinate</name>
        <dbReference type="ChEBI" id="CHEBI:16845"/>
    </ligand>
</feature>
<accession>Q1C0I8</accession>
<name>DAPB_YERPA</name>
<comment type="function">
    <text evidence="1">Catalyzes the conversion of 4-hydroxy-tetrahydrodipicolinate (HTPA) to tetrahydrodipicolinate.</text>
</comment>
<comment type="catalytic activity">
    <reaction evidence="1">
        <text>(S)-2,3,4,5-tetrahydrodipicolinate + NAD(+) + H2O = (2S,4S)-4-hydroxy-2,3,4,5-tetrahydrodipicolinate + NADH + H(+)</text>
        <dbReference type="Rhea" id="RHEA:35323"/>
        <dbReference type="ChEBI" id="CHEBI:15377"/>
        <dbReference type="ChEBI" id="CHEBI:15378"/>
        <dbReference type="ChEBI" id="CHEBI:16845"/>
        <dbReference type="ChEBI" id="CHEBI:57540"/>
        <dbReference type="ChEBI" id="CHEBI:57945"/>
        <dbReference type="ChEBI" id="CHEBI:67139"/>
        <dbReference type="EC" id="1.17.1.8"/>
    </reaction>
</comment>
<comment type="catalytic activity">
    <reaction evidence="1">
        <text>(S)-2,3,4,5-tetrahydrodipicolinate + NADP(+) + H2O = (2S,4S)-4-hydroxy-2,3,4,5-tetrahydrodipicolinate + NADPH + H(+)</text>
        <dbReference type="Rhea" id="RHEA:35331"/>
        <dbReference type="ChEBI" id="CHEBI:15377"/>
        <dbReference type="ChEBI" id="CHEBI:15378"/>
        <dbReference type="ChEBI" id="CHEBI:16845"/>
        <dbReference type="ChEBI" id="CHEBI:57783"/>
        <dbReference type="ChEBI" id="CHEBI:58349"/>
        <dbReference type="ChEBI" id="CHEBI:67139"/>
        <dbReference type="EC" id="1.17.1.8"/>
    </reaction>
</comment>
<comment type="pathway">
    <text evidence="1">Amino-acid biosynthesis; L-lysine biosynthesis via DAP pathway; (S)-tetrahydrodipicolinate from L-aspartate: step 4/4.</text>
</comment>
<comment type="subunit">
    <text evidence="1">Homotetramer.</text>
</comment>
<comment type="subcellular location">
    <subcellularLocation>
        <location evidence="1">Cytoplasm</location>
    </subcellularLocation>
</comment>
<comment type="similarity">
    <text evidence="1">Belongs to the DapB family.</text>
</comment>
<comment type="caution">
    <text evidence="2">Was originally thought to be a dihydrodipicolinate reductase (DHDPR), catalyzing the conversion of dihydrodipicolinate to tetrahydrodipicolinate. However, it was shown in E.coli that the substrate of the enzymatic reaction is not dihydrodipicolinate (DHDP) but in fact (2S,4S)-4-hydroxy-2,3,4,5-tetrahydrodipicolinic acid (HTPA), the product released by the DapA-catalyzed reaction.</text>
</comment>
<sequence>MTDSTIRIAIVGAGGRMGRQLIQAVTQMEGVVLGAAIERKGSTLVGSDAGELAGVGLLNVIVGDDLSQLTDNFDVLIDFTRPEGTLEHLAICRQHRKAMVIGTTGFDEAGKAAISEAAADIGIVFAANFSVGVNVVLKLLEKAAKVMGDYTDIEIIEAHHRHKVDAPSGTALAMGEAIADAMGRSLKDCAVYSREGYTGERKPGTIGFATVRAGDIVGEHTAMFADIGERVEITHKATSRMTFAHGAVKSAIWLGKHDNGLFDMRDVLNLNEL</sequence>